<proteinExistence type="evidence at protein level"/>
<name>UBIQJ_DICDI</name>
<keyword id="KW-0963">Cytoplasm</keyword>
<keyword id="KW-1017">Isopeptide bond</keyword>
<keyword id="KW-0539">Nucleus</keyword>
<keyword id="KW-1185">Reference proteome</keyword>
<keyword id="KW-0677">Repeat</keyword>
<keyword id="KW-0832">Ubl conjugation</keyword>
<organism>
    <name type="scientific">Dictyostelium discoideum</name>
    <name type="common">Social amoeba</name>
    <dbReference type="NCBI Taxonomy" id="44689"/>
    <lineage>
        <taxon>Eukaryota</taxon>
        <taxon>Amoebozoa</taxon>
        <taxon>Evosea</taxon>
        <taxon>Eumycetozoa</taxon>
        <taxon>Dictyostelia</taxon>
        <taxon>Dictyosteliales</taxon>
        <taxon>Dictyosteliaceae</taxon>
        <taxon>Dictyostelium</taxon>
    </lineage>
</organism>
<sequence>MQIFVKTLTGKTITLEVEGSDNIENVKAKIQDKEGIPPDQQRLIFAGKQLEDGRTLSDYNIQKESTLHLVLRLRGGMQIFVKTLTGKTITLEVEGSDNIENVKAKIQDKEGIPPDQQRLIFAGKQLEDGRTLSDYNIQKESTLHLVLRLRGGMQIFVKTLTGKTITLEVEGSDNIENVKAKIQDKEGIPPDQQRLIFAGKQLEDGRTLSDYNIQKESTLHLVLRLRGGMQIFVKTLTGKTITLEVEGSDNIENVKAKIQDKEGIPPDQQRLIFAGKQLEDGRTLSDYNIQKESTLHLVLRLRGGN</sequence>
<reference key="1">
    <citation type="journal article" date="2005" name="Nature">
        <title>The genome of the social amoeba Dictyostelium discoideum.</title>
        <authorList>
            <person name="Eichinger L."/>
            <person name="Pachebat J.A."/>
            <person name="Gloeckner G."/>
            <person name="Rajandream M.A."/>
            <person name="Sucgang R."/>
            <person name="Berriman M."/>
            <person name="Song J."/>
            <person name="Olsen R."/>
            <person name="Szafranski K."/>
            <person name="Xu Q."/>
            <person name="Tunggal B."/>
            <person name="Kummerfeld S."/>
            <person name="Madera M."/>
            <person name="Konfortov B.A."/>
            <person name="Rivero F."/>
            <person name="Bankier A.T."/>
            <person name="Lehmann R."/>
            <person name="Hamlin N."/>
            <person name="Davies R."/>
            <person name="Gaudet P."/>
            <person name="Fey P."/>
            <person name="Pilcher K."/>
            <person name="Chen G."/>
            <person name="Saunders D."/>
            <person name="Sodergren E.J."/>
            <person name="Davis P."/>
            <person name="Kerhornou A."/>
            <person name="Nie X."/>
            <person name="Hall N."/>
            <person name="Anjard C."/>
            <person name="Hemphill L."/>
            <person name="Bason N."/>
            <person name="Farbrother P."/>
            <person name="Desany B."/>
            <person name="Just E."/>
            <person name="Morio T."/>
            <person name="Rost R."/>
            <person name="Churcher C.M."/>
            <person name="Cooper J."/>
            <person name="Haydock S."/>
            <person name="van Driessche N."/>
            <person name="Cronin A."/>
            <person name="Goodhead I."/>
            <person name="Muzny D.M."/>
            <person name="Mourier T."/>
            <person name="Pain A."/>
            <person name="Lu M."/>
            <person name="Harper D."/>
            <person name="Lindsay R."/>
            <person name="Hauser H."/>
            <person name="James K.D."/>
            <person name="Quiles M."/>
            <person name="Madan Babu M."/>
            <person name="Saito T."/>
            <person name="Buchrieser C."/>
            <person name="Wardroper A."/>
            <person name="Felder M."/>
            <person name="Thangavelu M."/>
            <person name="Johnson D."/>
            <person name="Knights A."/>
            <person name="Loulseged H."/>
            <person name="Mungall K.L."/>
            <person name="Oliver K."/>
            <person name="Price C."/>
            <person name="Quail M.A."/>
            <person name="Urushihara H."/>
            <person name="Hernandez J."/>
            <person name="Rabbinowitsch E."/>
            <person name="Steffen D."/>
            <person name="Sanders M."/>
            <person name="Ma J."/>
            <person name="Kohara Y."/>
            <person name="Sharp S."/>
            <person name="Simmonds M.N."/>
            <person name="Spiegler S."/>
            <person name="Tivey A."/>
            <person name="Sugano S."/>
            <person name="White B."/>
            <person name="Walker D."/>
            <person name="Woodward J.R."/>
            <person name="Winckler T."/>
            <person name="Tanaka Y."/>
            <person name="Shaulsky G."/>
            <person name="Schleicher M."/>
            <person name="Weinstock G.M."/>
            <person name="Rosenthal A."/>
            <person name="Cox E.C."/>
            <person name="Chisholm R.L."/>
            <person name="Gibbs R.A."/>
            <person name="Loomis W.F."/>
            <person name="Platzer M."/>
            <person name="Kay R.R."/>
            <person name="Williams J.G."/>
            <person name="Dear P.H."/>
            <person name="Noegel A.A."/>
            <person name="Barrell B.G."/>
            <person name="Kuspa A."/>
        </authorList>
    </citation>
    <scope>NUCLEOTIDE SEQUENCE [LARGE SCALE GENOMIC DNA]</scope>
    <source>
        <strain>AX4</strain>
    </source>
</reference>
<reference key="2">
    <citation type="journal article" date="2006" name="J. Proteome Res.">
        <title>Identification of novel centrosomal proteins in Dictyostelium discoideum by comparative proteomic approaches.</title>
        <authorList>
            <person name="Reinders Y."/>
            <person name="Schulz I."/>
            <person name="Graef R."/>
            <person name="Sickmann A."/>
        </authorList>
    </citation>
    <scope>IDENTIFICATION BY MASS SPECTROMETRY [LARGE SCALE ANALYSIS]</scope>
</reference>
<dbReference type="EMBL" id="AAFI02000005">
    <property type="protein sequence ID" value="EAL72079.1"/>
    <property type="molecule type" value="Genomic_DNA"/>
</dbReference>
<dbReference type="RefSeq" id="XP_645986.1">
    <property type="nucleotide sequence ID" value="XM_640894.1"/>
</dbReference>
<dbReference type="SMR" id="P0CG88"/>
<dbReference type="FunCoup" id="P0CG88">
    <property type="interactions" value="158"/>
</dbReference>
<dbReference type="STRING" id="44689.P0CG88"/>
<dbReference type="EnsemblProtists" id="EAL72079">
    <property type="protein sequence ID" value="EAL72079"/>
    <property type="gene ID" value="DDB_G0269458"/>
</dbReference>
<dbReference type="GeneID" id="8616931"/>
<dbReference type="KEGG" id="ddi:DDB_G0269458"/>
<dbReference type="KEGG" id="ddi:DDB_G0291928"/>
<dbReference type="dictyBase" id="DDB_G0269458">
    <property type="gene designation" value="ubqJ"/>
</dbReference>
<dbReference type="VEuPathDB" id="AmoebaDB:DDB_G0291928"/>
<dbReference type="HOGENOM" id="CLU_010412_7_0_1"/>
<dbReference type="InParanoid" id="P0CG88"/>
<dbReference type="PhylomeDB" id="P0CG88"/>
<dbReference type="Reactome" id="R-DDI-110314">
    <property type="pathway name" value="Recognition of DNA damage by PCNA-containing replication complex"/>
</dbReference>
<dbReference type="Reactome" id="R-DDI-1169408">
    <property type="pathway name" value="ISG15 antiviral mechanism"/>
</dbReference>
<dbReference type="Reactome" id="R-DDI-1358803">
    <property type="pathway name" value="Downregulation of ERBB2:ERBB3 signaling"/>
</dbReference>
<dbReference type="Reactome" id="R-DDI-174048">
    <property type="pathway name" value="APC/C:Cdc20 mediated degradation of Cyclin B"/>
</dbReference>
<dbReference type="Reactome" id="R-DDI-174084">
    <property type="pathway name" value="Autodegradation of Cdh1 by Cdh1:APC/C"/>
</dbReference>
<dbReference type="Reactome" id="R-DDI-174154">
    <property type="pathway name" value="APC/C:Cdc20 mediated degradation of Securin"/>
</dbReference>
<dbReference type="Reactome" id="R-DDI-174178">
    <property type="pathway name" value="APC/C:Cdh1 mediated degradation of Cdc20 and other APC/C:Cdh1 targeted proteins in late mitosis/early G1"/>
</dbReference>
<dbReference type="Reactome" id="R-DDI-174184">
    <property type="pathway name" value="Cdc20:Phospho-APC/C mediated degradation of Cyclin A"/>
</dbReference>
<dbReference type="Reactome" id="R-DDI-179409">
    <property type="pathway name" value="APC-Cdc20 mediated degradation of Nek2A"/>
</dbReference>
<dbReference type="Reactome" id="R-DDI-2467813">
    <property type="pathway name" value="Separation of Sister Chromatids"/>
</dbReference>
<dbReference type="Reactome" id="R-DDI-2559582">
    <property type="pathway name" value="Senescence-Associated Secretory Phenotype (SASP)"/>
</dbReference>
<dbReference type="Reactome" id="R-DDI-349425">
    <property type="pathway name" value="Autodegradation of the E3 ubiquitin ligase COP1"/>
</dbReference>
<dbReference type="Reactome" id="R-DDI-382556">
    <property type="pathway name" value="ABC-family proteins mediated transport"/>
</dbReference>
<dbReference type="Reactome" id="R-DDI-450408">
    <property type="pathway name" value="AUF1 (hnRNP D0) binds and destabilizes mRNA"/>
</dbReference>
<dbReference type="Reactome" id="R-DDI-4641258">
    <property type="pathway name" value="Degradation of DVL"/>
</dbReference>
<dbReference type="Reactome" id="R-DDI-532668">
    <property type="pathway name" value="N-glycan trimming in the ER and Calnexin/Calreticulin cycle"/>
</dbReference>
<dbReference type="Reactome" id="R-DDI-5358346">
    <property type="pathway name" value="Hedgehog ligand biogenesis"/>
</dbReference>
<dbReference type="Reactome" id="R-DDI-5632684">
    <property type="pathway name" value="Hedgehog 'on' state"/>
</dbReference>
<dbReference type="Reactome" id="R-DDI-5655862">
    <property type="pathway name" value="Translesion synthesis by POLK"/>
</dbReference>
<dbReference type="Reactome" id="R-DDI-5658442">
    <property type="pathway name" value="Regulation of RAS by GAPs"/>
</dbReference>
<dbReference type="Reactome" id="R-DDI-5675482">
    <property type="pathway name" value="Regulation of necroptotic cell death"/>
</dbReference>
<dbReference type="Reactome" id="R-DDI-5687128">
    <property type="pathway name" value="MAPK6/MAPK4 signaling"/>
</dbReference>
<dbReference type="Reactome" id="R-DDI-5689603">
    <property type="pathway name" value="UCH proteinases"/>
</dbReference>
<dbReference type="Reactome" id="R-DDI-5689877">
    <property type="pathway name" value="Josephin domain DUBs"/>
</dbReference>
<dbReference type="Reactome" id="R-DDI-5689880">
    <property type="pathway name" value="Ub-specific processing proteases"/>
</dbReference>
<dbReference type="Reactome" id="R-DDI-5689901">
    <property type="pathway name" value="Metalloprotease DUBs"/>
</dbReference>
<dbReference type="Reactome" id="R-DDI-5696394">
    <property type="pathway name" value="DNA Damage Recognition in GG-NER"/>
</dbReference>
<dbReference type="Reactome" id="R-DDI-5696395">
    <property type="pathway name" value="Formation of Incision Complex in GG-NER"/>
</dbReference>
<dbReference type="Reactome" id="R-DDI-5696397">
    <property type="pathway name" value="Gap-filling DNA repair synthesis and ligation in GG-NER"/>
</dbReference>
<dbReference type="Reactome" id="R-DDI-6781823">
    <property type="pathway name" value="Formation of TC-NER Pre-Incision Complex"/>
</dbReference>
<dbReference type="Reactome" id="R-DDI-6782135">
    <property type="pathway name" value="Dual incision in TC-NER"/>
</dbReference>
<dbReference type="Reactome" id="R-DDI-6782210">
    <property type="pathway name" value="Gap-filling DNA repair synthesis and ligation in TC-NER"/>
</dbReference>
<dbReference type="Reactome" id="R-DDI-68949">
    <property type="pathway name" value="Orc1 removal from chromatin"/>
</dbReference>
<dbReference type="Reactome" id="R-DDI-69017">
    <property type="pathway name" value="CDK-mediated phosphorylation and removal of Cdc6"/>
</dbReference>
<dbReference type="Reactome" id="R-DDI-69231">
    <property type="pathway name" value="Cyclin D associated events in G1"/>
</dbReference>
<dbReference type="Reactome" id="R-DDI-69601">
    <property type="pathway name" value="Ubiquitin Mediated Degradation of Phosphorylated Cdc25A"/>
</dbReference>
<dbReference type="Reactome" id="R-DDI-8854050">
    <property type="pathway name" value="FBXL7 down-regulates AURKA during mitotic entry and in early mitosis"/>
</dbReference>
<dbReference type="Reactome" id="R-DDI-8866652">
    <property type="pathway name" value="Synthesis of active ubiquitin: roles of E1 and E2 enzymes"/>
</dbReference>
<dbReference type="Reactome" id="R-DDI-8866654">
    <property type="pathway name" value="E3 ubiquitin ligases ubiquitinate target proteins"/>
</dbReference>
<dbReference type="Reactome" id="R-DDI-8948747">
    <property type="pathway name" value="Regulation of PTEN localization"/>
</dbReference>
<dbReference type="Reactome" id="R-DDI-8948751">
    <property type="pathway name" value="Regulation of PTEN stability and activity"/>
</dbReference>
<dbReference type="Reactome" id="R-DDI-8951664">
    <property type="pathway name" value="Neddylation"/>
</dbReference>
<dbReference type="Reactome" id="R-DDI-901032">
    <property type="pathway name" value="ER Quality Control Compartment (ERQC)"/>
</dbReference>
<dbReference type="Reactome" id="R-DDI-9020702">
    <property type="pathway name" value="Interleukin-1 signaling"/>
</dbReference>
<dbReference type="Reactome" id="R-DDI-9033241">
    <property type="pathway name" value="Peroxisomal protein import"/>
</dbReference>
<dbReference type="Reactome" id="R-DDI-917729">
    <property type="pathway name" value="Endosomal Sorting Complex Required For Transport (ESCRT)"/>
</dbReference>
<dbReference type="Reactome" id="R-DDI-917937">
    <property type="pathway name" value="Iron uptake and transport"/>
</dbReference>
<dbReference type="Reactome" id="R-DDI-936440">
    <property type="pathway name" value="Negative regulators of DDX58/IFIH1 signaling"/>
</dbReference>
<dbReference type="Reactome" id="R-DDI-9646399">
    <property type="pathway name" value="Aggrephagy"/>
</dbReference>
<dbReference type="Reactome" id="R-DDI-9664873">
    <property type="pathway name" value="Pexophagy"/>
</dbReference>
<dbReference type="Reactome" id="R-DDI-9755511">
    <property type="pathway name" value="KEAP1-NFE2L2 pathway"/>
</dbReference>
<dbReference type="Reactome" id="R-DDI-9758274">
    <property type="pathway name" value="Regulation of NF-kappa B signaling"/>
</dbReference>
<dbReference type="Reactome" id="R-DDI-983168">
    <property type="pathway name" value="Antigen processing: Ubiquitination &amp; Proteasome degradation"/>
</dbReference>
<dbReference type="Reactome" id="R-DDI-9861718">
    <property type="pathway name" value="Regulation of pyruvate metabolism"/>
</dbReference>
<dbReference type="Reactome" id="R-DDI-9909505">
    <property type="pathway name" value="Modulation of host responses by IFN-stimulated genes"/>
</dbReference>
<dbReference type="PRO" id="PR:P0CG88"/>
<dbReference type="Proteomes" id="UP000002195">
    <property type="component" value="Chromosome 1"/>
</dbReference>
<dbReference type="GO" id="GO:0005737">
    <property type="term" value="C:cytoplasm"/>
    <property type="evidence" value="ECO:0000318"/>
    <property type="project" value="GO_Central"/>
</dbReference>
<dbReference type="GO" id="GO:0005634">
    <property type="term" value="C:nucleus"/>
    <property type="evidence" value="ECO:0000318"/>
    <property type="project" value="GO_Central"/>
</dbReference>
<dbReference type="GO" id="GO:0031386">
    <property type="term" value="F:protein tag activity"/>
    <property type="evidence" value="ECO:0000318"/>
    <property type="project" value="GO_Central"/>
</dbReference>
<dbReference type="GO" id="GO:0031625">
    <property type="term" value="F:ubiquitin protein ligase binding"/>
    <property type="evidence" value="ECO:0000318"/>
    <property type="project" value="GO_Central"/>
</dbReference>
<dbReference type="GO" id="GO:0019941">
    <property type="term" value="P:modification-dependent protein catabolic process"/>
    <property type="evidence" value="ECO:0000318"/>
    <property type="project" value="GO_Central"/>
</dbReference>
<dbReference type="GO" id="GO:0016567">
    <property type="term" value="P:protein ubiquitination"/>
    <property type="evidence" value="ECO:0000318"/>
    <property type="project" value="GO_Central"/>
</dbReference>
<dbReference type="CDD" id="cd01803">
    <property type="entry name" value="Ubl_ubiquitin"/>
    <property type="match status" value="4"/>
</dbReference>
<dbReference type="FunFam" id="3.10.20.90:FF:000158">
    <property type="entry name" value="Polyubiquitin 5"/>
    <property type="match status" value="2"/>
</dbReference>
<dbReference type="FunFam" id="3.10.20.90:FF:000014">
    <property type="entry name" value="Ubiquitin-60S ribosomal L40 fusion"/>
    <property type="match status" value="2"/>
</dbReference>
<dbReference type="Gene3D" id="3.10.20.90">
    <property type="entry name" value="Phosphatidylinositol 3-kinase Catalytic Subunit, Chain A, domain 1"/>
    <property type="match status" value="4"/>
</dbReference>
<dbReference type="InterPro" id="IPR000626">
    <property type="entry name" value="Ubiquitin-like_dom"/>
</dbReference>
<dbReference type="InterPro" id="IPR029071">
    <property type="entry name" value="Ubiquitin-like_domsf"/>
</dbReference>
<dbReference type="InterPro" id="IPR019954">
    <property type="entry name" value="Ubiquitin_CS"/>
</dbReference>
<dbReference type="InterPro" id="IPR019956">
    <property type="entry name" value="Ubiquitin_dom"/>
</dbReference>
<dbReference type="InterPro" id="IPR050158">
    <property type="entry name" value="Ubiquitin_ubiquitin-like"/>
</dbReference>
<dbReference type="PANTHER" id="PTHR10666">
    <property type="entry name" value="UBIQUITIN"/>
    <property type="match status" value="1"/>
</dbReference>
<dbReference type="Pfam" id="PF00240">
    <property type="entry name" value="ubiquitin"/>
    <property type="match status" value="4"/>
</dbReference>
<dbReference type="PRINTS" id="PR00348">
    <property type="entry name" value="UBIQUITIN"/>
</dbReference>
<dbReference type="SMART" id="SM00213">
    <property type="entry name" value="UBQ"/>
    <property type="match status" value="4"/>
</dbReference>
<dbReference type="SUPFAM" id="SSF54236">
    <property type="entry name" value="Ubiquitin-like"/>
    <property type="match status" value="4"/>
</dbReference>
<dbReference type="PROSITE" id="PS00299">
    <property type="entry name" value="UBIQUITIN_1"/>
    <property type="match status" value="4"/>
</dbReference>
<dbReference type="PROSITE" id="PS50053">
    <property type="entry name" value="UBIQUITIN_2"/>
    <property type="match status" value="4"/>
</dbReference>
<comment type="function">
    <text evidence="1">Ubiquitin exists either covalently attached to another protein, or free (unanchored). When covalently bound, it is conjugated to target proteins via an isopeptide bond either as a monomer (monoubiquitin), a polymer linked via different Lys residues of the ubiquitin (polyubiquitin chains) or a linear polymer linked via the initiator Met of the ubiquitin (linear polyubiquitin chains). Polyubiquitin chains, when attached to a target protein, have different functions depending on the Lys residue of the ubiquitin that is linked: Lys-48-linked is involved in protein degradation via the proteasome. Linear polymer chains formed via attachment by the initiator Met lead to cell signaling. Ubiquitin is usually conjugated to Lys residues of target proteins, however, in rare cases, conjugation to Cys or Ser residues has been observed. When polyubiquitin is free (unanchored-polyubiquitin), it also has distinct roles, such as in activation of protein kinases, and in signaling (By similarity).</text>
</comment>
<comment type="subcellular location">
    <subcellularLocation>
        <location evidence="1">Cytoplasm</location>
    </subcellularLocation>
    <subcellularLocation>
        <location evidence="1">Nucleus</location>
    </subcellularLocation>
</comment>
<comment type="miscellaneous">
    <text>Ubiquitin is synthesized as a polyubiquitin precursor with exact head to tail repeats. Some ubiquitin genes contain a single copy of ubiquitin fused to a ribosomal protein. In D.discoideum there are 9 genes: ubqA: 5 copies of Ub and a final Asn; ubqB: 1 copy of Ub and ribosomal protein eL40; ubqC: 1 copy of Ub and ribosomal protein eS31; ubqD: 3 copies of Ub and a final Leu; ubqF: 7 copies of Ub and a final Asn; ubqG: 5 copies of Ub and a final Leu; ubqH: 5 copies of Ub and a final Asn; ubqI: 4 copies of Ub and a final Asn; ubqJ: 4 copies of Ub and a final Asn.</text>
</comment>
<comment type="miscellaneous">
    <text>For the sake of clarity sequence features are annotated only for the first chain, and are not repeated for each of the following chains.</text>
</comment>
<comment type="similarity">
    <text evidence="3">Belongs to the ubiquitin family.</text>
</comment>
<gene>
    <name type="primary">ubqJ</name>
    <name type="ORF">DDB_G0269458</name>
</gene>
<evidence type="ECO:0000250" key="1"/>
<evidence type="ECO:0000255" key="2">
    <source>
        <dbReference type="PROSITE-ProRule" id="PRU00214"/>
    </source>
</evidence>
<evidence type="ECO:0000305" key="3"/>
<feature type="chain" id="PRO_0000396346" description="Ubiquitin">
    <location>
        <begin position="1"/>
        <end position="76"/>
    </location>
</feature>
<feature type="chain" id="PRO_0000396347" description="Ubiquitin">
    <location>
        <begin position="77"/>
        <end position="152"/>
    </location>
</feature>
<feature type="chain" id="PRO_0000396348" description="Ubiquitin">
    <location>
        <begin position="153"/>
        <end position="228"/>
    </location>
</feature>
<feature type="chain" id="PRO_0000396349" description="Ubiquitin">
    <location>
        <begin position="229"/>
        <end position="304"/>
    </location>
</feature>
<feature type="propeptide" id="PRO_0000396350">
    <location>
        <position position="305"/>
    </location>
</feature>
<feature type="domain" description="Ubiquitin-like 1" evidence="2">
    <location>
        <begin position="1"/>
        <end position="76"/>
    </location>
</feature>
<feature type="domain" description="Ubiquitin-like 2" evidence="2">
    <location>
        <begin position="77"/>
        <end position="152"/>
    </location>
</feature>
<feature type="domain" description="Ubiquitin-like 3" evidence="2">
    <location>
        <begin position="153"/>
        <end position="228"/>
    </location>
</feature>
<feature type="domain" description="Ubiquitin-like 4" evidence="2">
    <location>
        <begin position="229"/>
        <end position="304"/>
    </location>
</feature>
<feature type="cross-link" description="Glycyl lysine isopeptide (Lys-Gly) (interchain with G-Cter in ubiquitin)" evidence="1">
    <location>
        <position position="48"/>
    </location>
</feature>
<feature type="cross-link" description="Glycyl lysine isopeptide (Gly-Lys) (interchain with K-? in acceptor proteins)" evidence="2">
    <location>
        <position position="76"/>
    </location>
</feature>
<accession>P0CG88</accession>
<accession>P08618</accession>
<accession>Q54HH5</accession>
<accession>Q54L38</accession>
<accession>Q54SE1</accession>
<accession>Q54SP3</accession>
<accession>Q54UW7</accession>
<accession>Q54WJ3</accession>
<accession>Q550W7</accession>
<accession>Q55DZ5</accession>
<accession>Q86KQ4</accession>
<protein>
    <recommendedName>
        <fullName>Polyubiquitin-J</fullName>
    </recommendedName>
    <component>
        <recommendedName>
            <fullName>Ubiquitin</fullName>
        </recommendedName>
    </component>
</protein>